<dbReference type="EMBL" id="L23800">
    <property type="protein sequence ID" value="AAB42177.1"/>
    <property type="molecule type" value="Genomic_DNA"/>
</dbReference>
<dbReference type="PIR" id="A90087">
    <property type="entry name" value="HBTG"/>
</dbReference>
<dbReference type="SMR" id="P02110"/>
<dbReference type="GO" id="GO:0072562">
    <property type="term" value="C:blood microparticle"/>
    <property type="evidence" value="ECO:0007669"/>
    <property type="project" value="TreeGrafter"/>
</dbReference>
<dbReference type="GO" id="GO:0031838">
    <property type="term" value="C:haptoglobin-hemoglobin complex"/>
    <property type="evidence" value="ECO:0007669"/>
    <property type="project" value="TreeGrafter"/>
</dbReference>
<dbReference type="GO" id="GO:0005833">
    <property type="term" value="C:hemoglobin complex"/>
    <property type="evidence" value="ECO:0007669"/>
    <property type="project" value="InterPro"/>
</dbReference>
<dbReference type="GO" id="GO:0031720">
    <property type="term" value="F:haptoglobin binding"/>
    <property type="evidence" value="ECO:0007669"/>
    <property type="project" value="TreeGrafter"/>
</dbReference>
<dbReference type="GO" id="GO:0020037">
    <property type="term" value="F:heme binding"/>
    <property type="evidence" value="ECO:0007669"/>
    <property type="project" value="InterPro"/>
</dbReference>
<dbReference type="GO" id="GO:0046872">
    <property type="term" value="F:metal ion binding"/>
    <property type="evidence" value="ECO:0007669"/>
    <property type="project" value="UniProtKB-KW"/>
</dbReference>
<dbReference type="GO" id="GO:0043177">
    <property type="term" value="F:organic acid binding"/>
    <property type="evidence" value="ECO:0007669"/>
    <property type="project" value="TreeGrafter"/>
</dbReference>
<dbReference type="GO" id="GO:0019825">
    <property type="term" value="F:oxygen binding"/>
    <property type="evidence" value="ECO:0007669"/>
    <property type="project" value="InterPro"/>
</dbReference>
<dbReference type="GO" id="GO:0005344">
    <property type="term" value="F:oxygen carrier activity"/>
    <property type="evidence" value="ECO:0007669"/>
    <property type="project" value="UniProtKB-KW"/>
</dbReference>
<dbReference type="GO" id="GO:0004601">
    <property type="term" value="F:peroxidase activity"/>
    <property type="evidence" value="ECO:0007669"/>
    <property type="project" value="TreeGrafter"/>
</dbReference>
<dbReference type="GO" id="GO:0042744">
    <property type="term" value="P:hydrogen peroxide catabolic process"/>
    <property type="evidence" value="ECO:0007669"/>
    <property type="project" value="TreeGrafter"/>
</dbReference>
<dbReference type="CDD" id="cd08925">
    <property type="entry name" value="Hb-beta-like"/>
    <property type="match status" value="1"/>
</dbReference>
<dbReference type="FunFam" id="1.10.490.10:FF:000001">
    <property type="entry name" value="Hemoglobin subunit beta"/>
    <property type="match status" value="1"/>
</dbReference>
<dbReference type="Gene3D" id="1.10.490.10">
    <property type="entry name" value="Globins"/>
    <property type="match status" value="1"/>
</dbReference>
<dbReference type="InterPro" id="IPR000971">
    <property type="entry name" value="Globin"/>
</dbReference>
<dbReference type="InterPro" id="IPR009050">
    <property type="entry name" value="Globin-like_sf"/>
</dbReference>
<dbReference type="InterPro" id="IPR012292">
    <property type="entry name" value="Globin/Proto"/>
</dbReference>
<dbReference type="InterPro" id="IPR002337">
    <property type="entry name" value="Hemoglobin_b"/>
</dbReference>
<dbReference type="InterPro" id="IPR050056">
    <property type="entry name" value="Hemoglobin_oxygen_transport"/>
</dbReference>
<dbReference type="PANTHER" id="PTHR11442">
    <property type="entry name" value="HEMOGLOBIN FAMILY MEMBER"/>
    <property type="match status" value="1"/>
</dbReference>
<dbReference type="PANTHER" id="PTHR11442:SF7">
    <property type="entry name" value="HEMOGLOBIN SUBUNIT EPSILON"/>
    <property type="match status" value="1"/>
</dbReference>
<dbReference type="Pfam" id="PF00042">
    <property type="entry name" value="Globin"/>
    <property type="match status" value="1"/>
</dbReference>
<dbReference type="PRINTS" id="PR00814">
    <property type="entry name" value="BETAHAEM"/>
</dbReference>
<dbReference type="SUPFAM" id="SSF46458">
    <property type="entry name" value="Globin-like"/>
    <property type="match status" value="1"/>
</dbReference>
<dbReference type="PROSITE" id="PS01033">
    <property type="entry name" value="GLOBIN"/>
    <property type="match status" value="1"/>
</dbReference>
<evidence type="ECO:0000250" key="1">
    <source>
        <dbReference type="UniProtKB" id="P02086"/>
    </source>
</evidence>
<evidence type="ECO:0000250" key="2">
    <source>
        <dbReference type="UniProtKB" id="P68871"/>
    </source>
</evidence>
<evidence type="ECO:0000255" key="3">
    <source>
        <dbReference type="PROSITE-ProRule" id="PRU00238"/>
    </source>
</evidence>
<evidence type="ECO:0000269" key="4">
    <source>
    </source>
</evidence>
<evidence type="ECO:0000269" key="5">
    <source>
    </source>
</evidence>
<gene>
    <name type="primary">HBB</name>
</gene>
<protein>
    <recommendedName>
        <fullName>Hemoglobin subunit beta</fullName>
    </recommendedName>
    <alternativeName>
        <fullName>Beta-globin</fullName>
    </alternativeName>
    <alternativeName>
        <fullName>Hemoglobin beta chain</fullName>
    </alternativeName>
</protein>
<reference key="1">
    <citation type="submission" date="1994-01" db="EMBL/GenBank/DDBJ databases">
        <authorList>
            <person name="Lee M.H."/>
            <person name="Shroff R."/>
            <person name="Hope R."/>
        </authorList>
    </citation>
    <scope>NUCLEOTIDE SEQUENCE [GENOMIC DNA]</scope>
    <source>
        <tissue>Kidney</tissue>
    </source>
</reference>
<reference key="2">
    <citation type="journal article" date="1972" name="Aust. J. Biol. Sci.">
        <title>Studies on monotreme proteins. I. Amino acid sequence of the beta-chain of haemoglobin from the echidna, Tachyglossus aculeatus aculeatus.</title>
        <authorList>
            <person name="Whittaker R.G."/>
            <person name="Fisher W.K."/>
            <person name="Thompson E.O.P."/>
        </authorList>
    </citation>
    <scope>PROTEIN SEQUENCE OF 2-147</scope>
</reference>
<reference key="3">
    <citation type="journal article" date="1973" name="Aust. J. Biol. Sci.">
        <title>Studies on monotreme proteins. 3. Amino acid sequence of the alpha- and beta-globin chains of the minor haemoglobin from the echidna, Tachyglossus aculeatus aculeatus.</title>
        <authorList>
            <person name="Thompson E.O.P."/>
            <person name="Fisher W.K."/>
            <person name="Whittaker R.G."/>
        </authorList>
    </citation>
    <scope>VARIANTS GLU-6 AND ALA-139</scope>
</reference>
<feature type="initiator methionine" description="Removed" evidence="1 4">
    <location>
        <position position="1"/>
    </location>
</feature>
<feature type="chain" id="PRO_0000053120" description="Hemoglobin subunit beta">
    <location>
        <begin position="2"/>
        <end position="147"/>
    </location>
</feature>
<feature type="domain" description="Globin" evidence="3">
    <location>
        <begin position="3"/>
        <end position="147"/>
    </location>
</feature>
<feature type="binding site" description="distal binding residue">
    <location>
        <position position="64"/>
    </location>
    <ligand>
        <name>heme b</name>
        <dbReference type="ChEBI" id="CHEBI:60344"/>
    </ligand>
    <ligandPart>
        <name>Fe</name>
        <dbReference type="ChEBI" id="CHEBI:18248"/>
    </ligandPart>
</feature>
<feature type="binding site" description="proximal binding residue">
    <location>
        <position position="93"/>
    </location>
    <ligand>
        <name>heme b</name>
        <dbReference type="ChEBI" id="CHEBI:60344"/>
    </ligand>
    <ligandPart>
        <name>Fe</name>
        <dbReference type="ChEBI" id="CHEBI:18248"/>
    </ligandPart>
</feature>
<feature type="modified residue" description="N-acetylvaline" evidence="1">
    <location>
        <position position="2"/>
    </location>
</feature>
<feature type="modified residue" description="Phosphothreonine" evidence="2">
    <location>
        <position position="13"/>
    </location>
</feature>
<feature type="modified residue" description="Phosphoserine" evidence="2">
    <location>
        <position position="45"/>
    </location>
</feature>
<feature type="modified residue" description="N6-acetyllysine" evidence="2">
    <location>
        <position position="60"/>
    </location>
</feature>
<feature type="modified residue" description="N6-acetyllysine" evidence="2">
    <location>
        <position position="83"/>
    </location>
</feature>
<feature type="modified residue" description="S-nitrosocysteine" evidence="2">
    <location>
        <position position="94"/>
    </location>
</feature>
<feature type="modified residue" description="N6-acetyllysine" evidence="2">
    <location>
        <position position="145"/>
    </location>
</feature>
<feature type="sequence variant" description="In allelic variant." evidence="5">
    <original>G</original>
    <variation>E</variation>
    <location>
        <position position="6"/>
    </location>
</feature>
<feature type="sequence variant" description="In allelic variant." evidence="5">
    <original>S</original>
    <variation>A</variation>
    <location>
        <position position="139"/>
    </location>
</feature>
<proteinExistence type="evidence at protein level"/>
<sequence>MVHLSGSEKTAVTNLWGHVNVNELGGEALGRLLVVYPWTQRFFESFGDLSSADAVMGNAKVKAHGAKVLTSFGDALKNLDNLKGTFAKLSELHCDKLHVDPENFNRLGNVLVVVLARHFSKEFTPEAQAAWQKLVSGVSHALAHKYH</sequence>
<accession>P02110</accession>
<name>HBB_TACAC</name>
<keyword id="KW-0007">Acetylation</keyword>
<keyword id="KW-0903">Direct protein sequencing</keyword>
<keyword id="KW-0349">Heme</keyword>
<keyword id="KW-0408">Iron</keyword>
<keyword id="KW-0479">Metal-binding</keyword>
<keyword id="KW-0561">Oxygen transport</keyword>
<keyword id="KW-0597">Phosphoprotein</keyword>
<keyword id="KW-0702">S-nitrosylation</keyword>
<keyword id="KW-0813">Transport</keyword>
<organism>
    <name type="scientific">Tachyglossus aculeatus aculeatus</name>
    <name type="common">Southeast Australian short-beaked echidna</name>
    <dbReference type="NCBI Taxonomy" id="49271"/>
    <lineage>
        <taxon>Eukaryota</taxon>
        <taxon>Metazoa</taxon>
        <taxon>Chordata</taxon>
        <taxon>Craniata</taxon>
        <taxon>Vertebrata</taxon>
        <taxon>Euteleostomi</taxon>
        <taxon>Mammalia</taxon>
        <taxon>Monotremata</taxon>
        <taxon>Tachyglossidae</taxon>
        <taxon>Tachyglossus</taxon>
    </lineage>
</organism>
<comment type="function">
    <text>Involved in oxygen transport from the lung to the various peripheral tissues.</text>
</comment>
<comment type="subunit">
    <text>Heterotetramer of two alpha chains and two beta chains.</text>
</comment>
<comment type="tissue specificity">
    <text>Red blood cells.</text>
</comment>
<comment type="miscellaneous">
    <text>In a single animal, two types of beta chains were obtained from hemoglobin I having the alpha-1 B chain variant.</text>
</comment>
<comment type="similarity">
    <text evidence="3">Belongs to the globin family.</text>
</comment>